<reference key="1">
    <citation type="journal article" date="1997" name="J. Bacteriol.">
        <title>Analysis of the cbbXYZ operon in Rhodobacter sphaeroides.</title>
        <authorList>
            <person name="Gibson J.L."/>
            <person name="Tabita F.R."/>
        </authorList>
    </citation>
    <scope>NUCLEOTIDE SEQUENCE [GENOMIC DNA]</scope>
    <source>
        <strain>HR</strain>
    </source>
</reference>
<reference key="2">
    <citation type="journal article" date="2016" name="Proc. Natl. Acad. Sci. U.S.A.">
        <title>Characterization of the heterooligomeric red-type rubisco activase from red algae.</title>
        <authorList>
            <person name="Loganathan N."/>
            <person name="Tsai Y.C."/>
            <person name="Mueller-Cajar O."/>
        </authorList>
    </citation>
    <scope>FUNCTION</scope>
    <scope>SUBUNIT</scope>
</reference>
<reference key="3">
    <citation type="journal article" date="2011" name="Nature">
        <title>Structure and function of the AAA+ protein CbbX, a red-type Rubisco activase.</title>
        <authorList>
            <person name="Mueller-Cajar O."/>
            <person name="Stotz M."/>
            <person name="Wendler P."/>
            <person name="Hartl F.U."/>
            <person name="Bracher A."/>
            <person name="Hayer-Hartl M."/>
        </authorList>
    </citation>
    <scope>X-RAY CRYSTALLOGRAPHY (3.00 ANGSTROMS)</scope>
    <scope>FUNCTION</scope>
    <scope>SUBUNIT</scope>
    <scope>MUTAGENESIS OF ALA-48; LYS-80; TYR-114; LYS-123; GLU-138; ARG-194; HIS-198; ARG-239; SER-250; ASN-253; ARG-257 AND ARG-261</scope>
</reference>
<sequence length="309" mass="34684">MTDAATAPTSIDLRAEYEGSGAKEVLEELDRELIGLKPVKDRIRETAALLLVERARQKLGLAHETPTLHMSFTGNPGTGKTTVALKMAGLLHRLGYVRKGHLVSVTRDDLVGQYIGHTAPKTKEVLKRAMGGVLFIDEAYYLYRPDNERDYGQEAIEILLQVMENNRDDLVVILAGYADRMENFFQSNPGFRSRIAHHIEFPDYSDEELFEIAGHMLDDQNYQMTPEAETALRAYIGLRRNQPHFANARSIRNALDRARLRQANRLFTASSGPLDARALSTMAEEDIRASRVFKGGLDSERRAAEALAR</sequence>
<evidence type="ECO:0000255" key="1"/>
<evidence type="ECO:0000269" key="2">
    <source>
    </source>
</evidence>
<evidence type="ECO:0000269" key="3">
    <source>
    </source>
</evidence>
<evidence type="ECO:0000305" key="4"/>
<evidence type="ECO:0007829" key="5">
    <source>
        <dbReference type="PDB" id="3SYK"/>
    </source>
</evidence>
<evidence type="ECO:0007829" key="6">
    <source>
        <dbReference type="PDB" id="3SYL"/>
    </source>
</evidence>
<protein>
    <recommendedName>
        <fullName>Protein CbbX</fullName>
    </recommendedName>
</protein>
<organism>
    <name type="scientific">Cereibacter sphaeroides</name>
    <name type="common">Rhodobacter sphaeroides</name>
    <dbReference type="NCBI Taxonomy" id="1063"/>
    <lineage>
        <taxon>Bacteria</taxon>
        <taxon>Pseudomonadati</taxon>
        <taxon>Pseudomonadota</taxon>
        <taxon>Alphaproteobacteria</taxon>
        <taxon>Rhodobacterales</taxon>
        <taxon>Paracoccaceae</taxon>
        <taxon>Cereibacter</taxon>
    </lineage>
</organism>
<proteinExistence type="evidence at protein level"/>
<name>CBBX_CERSP</name>
<comment type="function">
    <text evidence="2 3">ATPase involved in the activation of red-type RuBisCo (ribulose-1,5-bisphosphate carboxylase/oxygenase), which tends to form inactive complexes with its substrate ribulose 1,5-bisphosphate (RuBP) (PubMed:22048315, PubMed:27872295). Catalyzes the release of RuBP from inhibited RuBisCo in an ATP-dependent manner (PubMed:22048315, PubMed:27872295). Activation of RuBisCO involves the ATP-dependent carboxylation of the epsilon-amino group of lysine leading to a carbamate structure (PubMed:22048315, PubMed:27872295).</text>
</comment>
<comment type="subunit">
    <text evidence="2 3">Forms homohexameric rings (PubMed:22048315). The oligomeric transition is triggered by ribulose 1,5-biphosphate (PubMed:27872295).</text>
</comment>
<comment type="similarity">
    <text evidence="4">Belongs to the CbxX/CfxQ family.</text>
</comment>
<keyword id="KW-0002">3D-structure</keyword>
<keyword id="KW-0067">ATP-binding</keyword>
<keyword id="KW-0547">Nucleotide-binding</keyword>
<feature type="chain" id="PRO_0000063034" description="Protein CbbX">
    <location>
        <begin position="1"/>
        <end position="309"/>
    </location>
</feature>
<feature type="binding site" evidence="1">
    <location>
        <begin position="74"/>
        <end position="81"/>
    </location>
    <ligand>
        <name>ATP</name>
        <dbReference type="ChEBI" id="CHEBI:30616"/>
    </ligand>
</feature>
<feature type="mutagenesis site" description="Reduces ATPase and activase activities 8-fold." evidence="2">
    <original>A</original>
    <variation>N</variation>
    <location>
        <position position="48"/>
    </location>
</feature>
<feature type="mutagenesis site" description="Abolishes ATPase and activase activities." evidence="2">
    <original>K</original>
    <variation>A</variation>
    <location>
        <position position="80"/>
    </location>
</feature>
<feature type="mutagenesis site" description="Increases ATPase activity and abolishes activase activity." evidence="2">
    <original>Y</original>
    <variation>A</variation>
    <location>
        <position position="114"/>
    </location>
</feature>
<feature type="mutagenesis site" description="Increases ATPase activity and reduces activase activity 5-fold." evidence="2">
    <original>K</original>
    <variation>A</variation>
    <location>
        <position position="123"/>
    </location>
</feature>
<feature type="mutagenesis site" description="Abolishes ATPase and activase activities." evidence="2">
    <original>E</original>
    <variation>Q</variation>
    <location>
        <position position="138"/>
    </location>
</feature>
<feature type="mutagenesis site" description="Abolishes ATPase and activase activities." evidence="2">
    <original>R</original>
    <variation>A</variation>
    <location>
        <position position="194"/>
    </location>
</feature>
<feature type="mutagenesis site" description="Reduces ATPase and activase activities 10-fold." evidence="2">
    <original>H</original>
    <variation>F</variation>
    <location>
        <position position="198"/>
    </location>
</feature>
<feature type="mutagenesis site" description="Abolishes ATPase and activase activities." evidence="2">
    <original>R</original>
    <variation>A</variation>
    <location>
        <position position="239"/>
    </location>
</feature>
<feature type="mutagenesis site" description="Abolishes ATPase and activase activities." evidence="2">
    <original>S</original>
    <variation>D</variation>
    <location>
        <position position="250"/>
    </location>
</feature>
<feature type="mutagenesis site" description="Abolishes ATPase and activase activities." evidence="2">
    <original>N</original>
    <variation>D</variation>
    <location>
        <position position="253"/>
    </location>
</feature>
<feature type="mutagenesis site" description="Abolishes ATPase and activase activities." evidence="2">
    <original>R</original>
    <variation>A</variation>
    <location>
        <position position="257"/>
    </location>
</feature>
<feature type="mutagenesis site" description="Abolishes ATPase and activase activities." evidence="2">
    <original>R</original>
    <variation>A</variation>
    <location>
        <position position="261"/>
    </location>
</feature>
<feature type="helix" evidence="6">
    <location>
        <begin position="13"/>
        <end position="19"/>
    </location>
</feature>
<feature type="helix" evidence="6">
    <location>
        <begin position="22"/>
        <end position="32"/>
    </location>
</feature>
<feature type="strand" evidence="6">
    <location>
        <begin position="33"/>
        <end position="35"/>
    </location>
</feature>
<feature type="helix" evidence="6">
    <location>
        <begin position="37"/>
        <end position="59"/>
    </location>
</feature>
<feature type="strand" evidence="6">
    <location>
        <begin position="69"/>
        <end position="74"/>
    </location>
</feature>
<feature type="strand" evidence="5">
    <location>
        <begin position="76"/>
        <end position="79"/>
    </location>
</feature>
<feature type="helix" evidence="6">
    <location>
        <begin position="80"/>
        <end position="93"/>
    </location>
</feature>
<feature type="strand" evidence="6">
    <location>
        <begin position="96"/>
        <end position="99"/>
    </location>
</feature>
<feature type="strand" evidence="6">
    <location>
        <begin position="102"/>
        <end position="105"/>
    </location>
</feature>
<feature type="helix" evidence="6">
    <location>
        <begin position="107"/>
        <end position="109"/>
    </location>
</feature>
<feature type="helix" evidence="6">
    <location>
        <begin position="118"/>
        <end position="129"/>
    </location>
</feature>
<feature type="strand" evidence="6">
    <location>
        <begin position="132"/>
        <end position="137"/>
    </location>
</feature>
<feature type="helix" evidence="6">
    <location>
        <begin position="139"/>
        <end position="141"/>
    </location>
</feature>
<feature type="strand" evidence="6">
    <location>
        <begin position="147"/>
        <end position="149"/>
    </location>
</feature>
<feature type="helix" evidence="6">
    <location>
        <begin position="153"/>
        <end position="165"/>
    </location>
</feature>
<feature type="turn" evidence="6">
    <location>
        <begin position="167"/>
        <end position="169"/>
    </location>
</feature>
<feature type="strand" evidence="6">
    <location>
        <begin position="171"/>
        <end position="176"/>
    </location>
</feature>
<feature type="helix" evidence="6">
    <location>
        <begin position="178"/>
        <end position="187"/>
    </location>
</feature>
<feature type="helix" evidence="6">
    <location>
        <begin position="191"/>
        <end position="194"/>
    </location>
</feature>
<feature type="strand" evidence="6">
    <location>
        <begin position="195"/>
        <end position="201"/>
    </location>
</feature>
<feature type="helix" evidence="6">
    <location>
        <begin position="206"/>
        <end position="219"/>
    </location>
</feature>
<feature type="helix" evidence="6">
    <location>
        <begin position="226"/>
        <end position="239"/>
    </location>
</feature>
<feature type="strand" evidence="6">
    <location>
        <begin position="242"/>
        <end position="244"/>
    </location>
</feature>
<feature type="helix" evidence="6">
    <location>
        <begin position="247"/>
        <end position="268"/>
    </location>
</feature>
<feature type="helix" evidence="6">
    <location>
        <begin position="276"/>
        <end position="280"/>
    </location>
</feature>
<feature type="helix" evidence="6">
    <location>
        <begin position="284"/>
        <end position="288"/>
    </location>
</feature>
<feature type="helix" evidence="5">
    <location>
        <begin position="291"/>
        <end position="294"/>
    </location>
</feature>
<gene>
    <name type="primary">cbbX</name>
</gene>
<accession>P95648</accession>
<dbReference type="EMBL" id="U67781">
    <property type="protein sequence ID" value="AAC44827.1"/>
    <property type="molecule type" value="Genomic_DNA"/>
</dbReference>
<dbReference type="PDB" id="3SYK">
    <property type="method" value="X-ray"/>
    <property type="resolution" value="3.08 A"/>
    <property type="chains" value="A/B=1-309"/>
</dbReference>
<dbReference type="PDB" id="3SYL">
    <property type="method" value="X-ray"/>
    <property type="resolution" value="3.00 A"/>
    <property type="chains" value="A/B=1-309"/>
</dbReference>
<dbReference type="PDB" id="3ZUH">
    <property type="method" value="EM"/>
    <property type="resolution" value="21.00 A"/>
    <property type="chains" value="A/B/C/D/E/F=8-296"/>
</dbReference>
<dbReference type="PDBsum" id="3SYK"/>
<dbReference type="PDBsum" id="3SYL"/>
<dbReference type="PDBsum" id="3ZUH"/>
<dbReference type="EMDB" id="EMD-3701"/>
<dbReference type="EMDB" id="EMD-3702"/>
<dbReference type="SMR" id="P95648"/>
<dbReference type="CD-CODE" id="294DEF4F">
    <property type="entry name" value="Synthetic Condensate 000159"/>
</dbReference>
<dbReference type="EvolutionaryTrace" id="P95648"/>
<dbReference type="GO" id="GO:0005524">
    <property type="term" value="F:ATP binding"/>
    <property type="evidence" value="ECO:0007669"/>
    <property type="project" value="UniProtKB-KW"/>
</dbReference>
<dbReference type="GO" id="GO:0016887">
    <property type="term" value="F:ATP hydrolysis activity"/>
    <property type="evidence" value="ECO:0007669"/>
    <property type="project" value="InterPro"/>
</dbReference>
<dbReference type="CDD" id="cd00009">
    <property type="entry name" value="AAA"/>
    <property type="match status" value="1"/>
</dbReference>
<dbReference type="FunFam" id="1.10.8.60:FF:000214">
    <property type="entry name" value="CbbX protein"/>
    <property type="match status" value="1"/>
</dbReference>
<dbReference type="FunFam" id="3.40.50.300:FF:000216">
    <property type="entry name" value="Type VII secretion ATPase EccA"/>
    <property type="match status" value="1"/>
</dbReference>
<dbReference type="Gene3D" id="1.10.8.60">
    <property type="match status" value="1"/>
</dbReference>
<dbReference type="Gene3D" id="3.40.50.300">
    <property type="entry name" value="P-loop containing nucleotide triphosphate hydrolases"/>
    <property type="match status" value="1"/>
</dbReference>
<dbReference type="InterPro" id="IPR003593">
    <property type="entry name" value="AAA+_ATPase"/>
</dbReference>
<dbReference type="InterPro" id="IPR041627">
    <property type="entry name" value="AAA_lid_6"/>
</dbReference>
<dbReference type="InterPro" id="IPR003959">
    <property type="entry name" value="ATPase_AAA_core"/>
</dbReference>
<dbReference type="InterPro" id="IPR000470">
    <property type="entry name" value="CbxX/CfqX_mono"/>
</dbReference>
<dbReference type="InterPro" id="IPR000641">
    <property type="entry name" value="CbxX/CfxQ"/>
</dbReference>
<dbReference type="InterPro" id="IPR050773">
    <property type="entry name" value="CbxX/CfxQ_RuBisCO_ESX"/>
</dbReference>
<dbReference type="InterPro" id="IPR027417">
    <property type="entry name" value="P-loop_NTPase"/>
</dbReference>
<dbReference type="NCBIfam" id="TIGR02880">
    <property type="entry name" value="cbbX_cfxQ"/>
    <property type="match status" value="1"/>
</dbReference>
<dbReference type="PANTHER" id="PTHR43392">
    <property type="entry name" value="AAA-TYPE ATPASE FAMILY PROTEIN / ANKYRIN REPEAT FAMILY PROTEIN"/>
    <property type="match status" value="1"/>
</dbReference>
<dbReference type="PANTHER" id="PTHR43392:SF2">
    <property type="entry name" value="AAA-TYPE ATPASE FAMILY PROTEIN _ ANKYRIN REPEAT FAMILY PROTEIN"/>
    <property type="match status" value="1"/>
</dbReference>
<dbReference type="Pfam" id="PF00004">
    <property type="entry name" value="AAA"/>
    <property type="match status" value="1"/>
</dbReference>
<dbReference type="Pfam" id="PF17866">
    <property type="entry name" value="AAA_lid_6"/>
    <property type="match status" value="1"/>
</dbReference>
<dbReference type="PRINTS" id="PR00819">
    <property type="entry name" value="CBXCFQXSUPER"/>
</dbReference>
<dbReference type="PRINTS" id="PR00820">
    <property type="entry name" value="CBXXCFQX"/>
</dbReference>
<dbReference type="SMART" id="SM00382">
    <property type="entry name" value="AAA"/>
    <property type="match status" value="1"/>
</dbReference>
<dbReference type="SUPFAM" id="SSF52540">
    <property type="entry name" value="P-loop containing nucleoside triphosphate hydrolases"/>
    <property type="match status" value="1"/>
</dbReference>